<name>CCMB_BRADU</name>
<dbReference type="EMBL" id="M60874">
    <property type="protein sequence ID" value="AAA26193.1"/>
    <property type="molecule type" value="Genomic_DNA"/>
</dbReference>
<dbReference type="EMBL" id="BA000040">
    <property type="protein sequence ID" value="BAC45733.1"/>
    <property type="molecule type" value="Genomic_DNA"/>
</dbReference>
<dbReference type="PIR" id="B39741">
    <property type="entry name" value="B39741"/>
</dbReference>
<dbReference type="RefSeq" id="NP_767108.1">
    <property type="nucleotide sequence ID" value="NC_004463.1"/>
</dbReference>
<dbReference type="RefSeq" id="WP_011083299.1">
    <property type="nucleotide sequence ID" value="NC_004463.1"/>
</dbReference>
<dbReference type="SMR" id="P30964"/>
<dbReference type="FunCoup" id="P30964">
    <property type="interactions" value="451"/>
</dbReference>
<dbReference type="STRING" id="224911.AAV28_41590"/>
<dbReference type="TCDB" id="3.A.1.107.1">
    <property type="family name" value="the atp-binding cassette (abc) superfamily"/>
</dbReference>
<dbReference type="EnsemblBacteria" id="BAC45733">
    <property type="protein sequence ID" value="BAC45733"/>
    <property type="gene ID" value="BAC45733"/>
</dbReference>
<dbReference type="GeneID" id="46495614"/>
<dbReference type="KEGG" id="bja:blr0468"/>
<dbReference type="PATRIC" id="fig|224911.44.peg.9001"/>
<dbReference type="eggNOG" id="COG2386">
    <property type="taxonomic scope" value="Bacteria"/>
</dbReference>
<dbReference type="HOGENOM" id="CLU_079069_1_0_5"/>
<dbReference type="InParanoid" id="P30964"/>
<dbReference type="OrthoDB" id="9812915at2"/>
<dbReference type="PhylomeDB" id="P30964"/>
<dbReference type="Proteomes" id="UP000002526">
    <property type="component" value="Chromosome"/>
</dbReference>
<dbReference type="GO" id="GO:0005886">
    <property type="term" value="C:plasma membrane"/>
    <property type="evidence" value="ECO:0000318"/>
    <property type="project" value="GO_Central"/>
</dbReference>
<dbReference type="GO" id="GO:0015232">
    <property type="term" value="F:heme transmembrane transporter activity"/>
    <property type="evidence" value="ECO:0007669"/>
    <property type="project" value="InterPro"/>
</dbReference>
<dbReference type="GO" id="GO:1903607">
    <property type="term" value="P:cytochrome c biosynthetic process"/>
    <property type="evidence" value="ECO:0000318"/>
    <property type="project" value="GO_Central"/>
</dbReference>
<dbReference type="GO" id="GO:0017004">
    <property type="term" value="P:cytochrome complex assembly"/>
    <property type="evidence" value="ECO:0007669"/>
    <property type="project" value="UniProtKB-KW"/>
</dbReference>
<dbReference type="InterPro" id="IPR003544">
    <property type="entry name" value="Cyt_c_biogenesis_CcmB"/>
</dbReference>
<dbReference type="InterPro" id="IPR026031">
    <property type="entry name" value="Cyt_c_CcmB_bac"/>
</dbReference>
<dbReference type="NCBIfam" id="TIGR01190">
    <property type="entry name" value="ccmB"/>
    <property type="match status" value="1"/>
</dbReference>
<dbReference type="PANTHER" id="PTHR30070:SF1">
    <property type="entry name" value="CYTOCHROME C BIOGENESIS B-RELATED"/>
    <property type="match status" value="1"/>
</dbReference>
<dbReference type="PANTHER" id="PTHR30070">
    <property type="entry name" value="HEME EXPORTER PROTEIN B"/>
    <property type="match status" value="1"/>
</dbReference>
<dbReference type="Pfam" id="PF03379">
    <property type="entry name" value="CcmB"/>
    <property type="match status" value="1"/>
</dbReference>
<dbReference type="PIRSF" id="PIRSF002764">
    <property type="entry name" value="CcmB"/>
    <property type="match status" value="1"/>
</dbReference>
<dbReference type="PRINTS" id="PR01414">
    <property type="entry name" value="CCMBBIOGNSIS"/>
</dbReference>
<comment type="function">
    <text>Required for the export of heme to the periplasm for the biogenesis of c-type cytochromes.</text>
</comment>
<comment type="subcellular location">
    <subcellularLocation>
        <location evidence="2">Cell inner membrane</location>
        <topology evidence="2">Multi-pass membrane protein</topology>
    </subcellularLocation>
</comment>
<comment type="similarity">
    <text evidence="2">Belongs to the CcmB/CycW/HelB family.</text>
</comment>
<proteinExistence type="inferred from homology"/>
<organism>
    <name type="scientific">Bradyrhizobium diazoefficiens (strain JCM 10833 / BCRC 13528 / IAM 13628 / NBRC 14792 / USDA 110)</name>
    <dbReference type="NCBI Taxonomy" id="224911"/>
    <lineage>
        <taxon>Bacteria</taxon>
        <taxon>Pseudomonadati</taxon>
        <taxon>Pseudomonadota</taxon>
        <taxon>Alphaproteobacteria</taxon>
        <taxon>Hyphomicrobiales</taxon>
        <taxon>Nitrobacteraceae</taxon>
        <taxon>Bradyrhizobium</taxon>
    </lineage>
</organism>
<gene>
    <name type="primary">cycW</name>
    <name type="synonym">ccmB</name>
    <name type="ordered locus">blr0468</name>
</gene>
<keyword id="KW-0997">Cell inner membrane</keyword>
<keyword id="KW-1003">Cell membrane</keyword>
<keyword id="KW-0201">Cytochrome c-type biogenesis</keyword>
<keyword id="KW-0472">Membrane</keyword>
<keyword id="KW-1185">Reference proteome</keyword>
<keyword id="KW-0812">Transmembrane</keyword>
<keyword id="KW-1133">Transmembrane helix</keyword>
<keyword id="KW-0813">Transport</keyword>
<feature type="chain" id="PRO_0000201544" description="Heme exporter protein B">
    <location>
        <begin position="1"/>
        <end position="222"/>
    </location>
</feature>
<feature type="transmembrane region" description="Helical" evidence="1">
    <location>
        <begin position="20"/>
        <end position="40"/>
    </location>
</feature>
<feature type="transmembrane region" description="Helical" evidence="1">
    <location>
        <begin position="44"/>
        <end position="64"/>
    </location>
</feature>
<feature type="transmembrane region" description="Helical" evidence="1">
    <location>
        <begin position="102"/>
        <end position="122"/>
    </location>
</feature>
<feature type="transmembrane region" description="Helical" evidence="1">
    <location>
        <begin position="134"/>
        <end position="154"/>
    </location>
</feature>
<feature type="transmembrane region" description="Helical" evidence="1">
    <location>
        <begin position="160"/>
        <end position="180"/>
    </location>
</feature>
<feature type="transmembrane region" description="Helical" evidence="1">
    <location>
        <begin position="195"/>
        <end position="215"/>
    </location>
</feature>
<accession>P30964</accession>
<sequence>MTALSALIRRDIRIALRVGGGALIGVLFFLTVVVLMPFAVGPDLALLSRLGPAILWLGALLASLLTLDRLFMADHEDGSLDLITMSRTPLELACAAKALAHWLAAGLPLIVATPVLGLLLNLDMVATGAVALTLLAGTPALTFTGMIGAALAVTLHRGGLLMAVLVLPLSIPVLIFGVAASQAVIVGPMSFGAPFSILCALSLVSLVIGPFAAAASLRHGLD</sequence>
<evidence type="ECO:0000255" key="1"/>
<evidence type="ECO:0000305" key="2"/>
<reference key="1">
    <citation type="journal article" date="1991" name="J. Biol. Chem.">
        <title>Discovery and sequence analysis of bacterial genes involved in the biogenesis of c-type cytochromes.</title>
        <authorList>
            <person name="Ramseier T.M."/>
            <person name="Winteler H.V."/>
            <person name="Hennecke H."/>
        </authorList>
    </citation>
    <scope>NUCLEOTIDE SEQUENCE [GENOMIC DNA]</scope>
    <source>
        <strain>USDA 110RIF15</strain>
    </source>
</reference>
<reference key="2">
    <citation type="journal article" date="2002" name="DNA Res.">
        <title>Complete genomic sequence of nitrogen-fixing symbiotic bacterium Bradyrhizobium japonicum USDA110.</title>
        <authorList>
            <person name="Kaneko T."/>
            <person name="Nakamura Y."/>
            <person name="Sato S."/>
            <person name="Minamisawa K."/>
            <person name="Uchiumi T."/>
            <person name="Sasamoto S."/>
            <person name="Watanabe A."/>
            <person name="Idesawa K."/>
            <person name="Iriguchi M."/>
            <person name="Kawashima K."/>
            <person name="Kohara M."/>
            <person name="Matsumoto M."/>
            <person name="Shimpo S."/>
            <person name="Tsuruoka H."/>
            <person name="Wada T."/>
            <person name="Yamada M."/>
            <person name="Tabata S."/>
        </authorList>
    </citation>
    <scope>NUCLEOTIDE SEQUENCE [LARGE SCALE GENOMIC DNA]</scope>
    <source>
        <strain>JCM 10833 / BCRC 13528 / IAM 13628 / NBRC 14792 / USDA 110</strain>
    </source>
</reference>
<protein>
    <recommendedName>
        <fullName>Heme exporter protein B</fullName>
    </recommendedName>
    <alternativeName>
        <fullName>Cytochrome c-type biogenesis protein CycW</fullName>
    </alternativeName>
</protein>